<protein>
    <recommendedName>
        <fullName evidence="1">Ribosomal RNA small subunit methyltransferase H</fullName>
        <ecNumber evidence="1">2.1.1.199</ecNumber>
    </recommendedName>
    <alternativeName>
        <fullName evidence="1">16S rRNA m(4)C1402 methyltransferase</fullName>
    </alternativeName>
    <alternativeName>
        <fullName evidence="1">rRNA (cytosine-N(4)-)-methyltransferase RsmH</fullName>
    </alternativeName>
</protein>
<feature type="chain" id="PRO_0000108757" description="Ribosomal RNA small subunit methyltransferase H">
    <location>
        <begin position="1"/>
        <end position="320"/>
    </location>
</feature>
<feature type="binding site" evidence="1">
    <location>
        <begin position="42"/>
        <end position="44"/>
    </location>
    <ligand>
        <name>S-adenosyl-L-methionine</name>
        <dbReference type="ChEBI" id="CHEBI:59789"/>
    </ligand>
</feature>
<feature type="binding site" evidence="1">
    <location>
        <position position="62"/>
    </location>
    <ligand>
        <name>S-adenosyl-L-methionine</name>
        <dbReference type="ChEBI" id="CHEBI:59789"/>
    </ligand>
</feature>
<feature type="binding site" evidence="1">
    <location>
        <position position="86"/>
    </location>
    <ligand>
        <name>S-adenosyl-L-methionine</name>
        <dbReference type="ChEBI" id="CHEBI:59789"/>
    </ligand>
</feature>
<feature type="binding site" evidence="1">
    <location>
        <position position="108"/>
    </location>
    <ligand>
        <name>S-adenosyl-L-methionine</name>
        <dbReference type="ChEBI" id="CHEBI:59789"/>
    </ligand>
</feature>
<feature type="binding site" evidence="1">
    <location>
        <position position="115"/>
    </location>
    <ligand>
        <name>S-adenosyl-L-methionine</name>
        <dbReference type="ChEBI" id="CHEBI:59789"/>
    </ligand>
</feature>
<name>RSMH_YERPS</name>
<organism>
    <name type="scientific">Yersinia pseudotuberculosis serotype I (strain IP32953)</name>
    <dbReference type="NCBI Taxonomy" id="273123"/>
    <lineage>
        <taxon>Bacteria</taxon>
        <taxon>Pseudomonadati</taxon>
        <taxon>Pseudomonadota</taxon>
        <taxon>Gammaproteobacteria</taxon>
        <taxon>Enterobacterales</taxon>
        <taxon>Yersiniaceae</taxon>
        <taxon>Yersinia</taxon>
    </lineage>
</organism>
<gene>
    <name evidence="1" type="primary">rsmH</name>
    <name type="synonym">mraW</name>
    <name type="ordered locus">YPTB0680</name>
</gene>
<proteinExistence type="inferred from homology"/>
<evidence type="ECO:0000255" key="1">
    <source>
        <dbReference type="HAMAP-Rule" id="MF_01007"/>
    </source>
</evidence>
<keyword id="KW-0963">Cytoplasm</keyword>
<keyword id="KW-0489">Methyltransferase</keyword>
<keyword id="KW-0698">rRNA processing</keyword>
<keyword id="KW-0949">S-adenosyl-L-methionine</keyword>
<keyword id="KW-0808">Transferase</keyword>
<accession>Q66EL3</accession>
<sequence length="320" mass="35590">MVDNNKTVDNNYKHTSVLLDEAVKGLNIRDNGIYIDGTFGRGGHSRLILSQLGPEGRLIAIDRDPEAIEAAKQITDPRFSIVHGPFSDLAHYVRDLDLVGRIDGILLDLGVSSPQLDDAERGFSFMRDGPLDMRMDPSRGLSAAEWLMKASADDIAWVLKTFGEERFAKRLAKAIVERNLTQPMTRTKELADLIANASPFRDKHKHPATRSFQAIRIYINSELEEIERALDGAHEVLAPEGRLSVISFHSLEDRIVKNFIRHHSRGPQVPAGLPLTEAQLRSMGGRTLKSVGKMMPGDAEIAENPRARSSVLRFAERIGE</sequence>
<dbReference type="EC" id="2.1.1.199" evidence="1"/>
<dbReference type="EMBL" id="BX936398">
    <property type="protein sequence ID" value="CAH19920.1"/>
    <property type="molecule type" value="Genomic_DNA"/>
</dbReference>
<dbReference type="RefSeq" id="WP_002210442.1">
    <property type="nucleotide sequence ID" value="NZ_CP009712.1"/>
</dbReference>
<dbReference type="SMR" id="Q66EL3"/>
<dbReference type="GeneID" id="57974068"/>
<dbReference type="KEGG" id="ypo:BZ17_1875"/>
<dbReference type="KEGG" id="yps:YPTB0680"/>
<dbReference type="PATRIC" id="fig|273123.14.peg.1989"/>
<dbReference type="Proteomes" id="UP000001011">
    <property type="component" value="Chromosome"/>
</dbReference>
<dbReference type="GO" id="GO:0005737">
    <property type="term" value="C:cytoplasm"/>
    <property type="evidence" value="ECO:0007669"/>
    <property type="project" value="UniProtKB-SubCell"/>
</dbReference>
<dbReference type="GO" id="GO:0071424">
    <property type="term" value="F:rRNA (cytosine-N4-)-methyltransferase activity"/>
    <property type="evidence" value="ECO:0007669"/>
    <property type="project" value="UniProtKB-UniRule"/>
</dbReference>
<dbReference type="GO" id="GO:0070475">
    <property type="term" value="P:rRNA base methylation"/>
    <property type="evidence" value="ECO:0007669"/>
    <property type="project" value="UniProtKB-UniRule"/>
</dbReference>
<dbReference type="FunFam" id="1.10.150.170:FF:000001">
    <property type="entry name" value="Ribosomal RNA small subunit methyltransferase H"/>
    <property type="match status" value="1"/>
</dbReference>
<dbReference type="Gene3D" id="1.10.150.170">
    <property type="entry name" value="Putative methyltransferase TM0872, insert domain"/>
    <property type="match status" value="1"/>
</dbReference>
<dbReference type="Gene3D" id="3.40.50.150">
    <property type="entry name" value="Vaccinia Virus protein VP39"/>
    <property type="match status" value="1"/>
</dbReference>
<dbReference type="HAMAP" id="MF_01007">
    <property type="entry name" value="16SrRNA_methyltr_H"/>
    <property type="match status" value="1"/>
</dbReference>
<dbReference type="InterPro" id="IPR002903">
    <property type="entry name" value="RsmH"/>
</dbReference>
<dbReference type="InterPro" id="IPR023397">
    <property type="entry name" value="SAM-dep_MeTrfase_MraW_recog"/>
</dbReference>
<dbReference type="InterPro" id="IPR029063">
    <property type="entry name" value="SAM-dependent_MTases_sf"/>
</dbReference>
<dbReference type="NCBIfam" id="TIGR00006">
    <property type="entry name" value="16S rRNA (cytosine(1402)-N(4))-methyltransferase RsmH"/>
    <property type="match status" value="1"/>
</dbReference>
<dbReference type="PANTHER" id="PTHR11265:SF0">
    <property type="entry name" value="12S RRNA N4-METHYLCYTIDINE METHYLTRANSFERASE"/>
    <property type="match status" value="1"/>
</dbReference>
<dbReference type="PANTHER" id="PTHR11265">
    <property type="entry name" value="S-ADENOSYL-METHYLTRANSFERASE MRAW"/>
    <property type="match status" value="1"/>
</dbReference>
<dbReference type="Pfam" id="PF01795">
    <property type="entry name" value="Methyltransf_5"/>
    <property type="match status" value="1"/>
</dbReference>
<dbReference type="PIRSF" id="PIRSF004486">
    <property type="entry name" value="MraW"/>
    <property type="match status" value="1"/>
</dbReference>
<dbReference type="SUPFAM" id="SSF81799">
    <property type="entry name" value="Putative methyltransferase TM0872, insert domain"/>
    <property type="match status" value="1"/>
</dbReference>
<dbReference type="SUPFAM" id="SSF53335">
    <property type="entry name" value="S-adenosyl-L-methionine-dependent methyltransferases"/>
    <property type="match status" value="1"/>
</dbReference>
<reference key="1">
    <citation type="journal article" date="2004" name="Proc. Natl. Acad. Sci. U.S.A.">
        <title>Insights into the evolution of Yersinia pestis through whole-genome comparison with Yersinia pseudotuberculosis.</title>
        <authorList>
            <person name="Chain P.S.G."/>
            <person name="Carniel E."/>
            <person name="Larimer F.W."/>
            <person name="Lamerdin J."/>
            <person name="Stoutland P.O."/>
            <person name="Regala W.M."/>
            <person name="Georgescu A.M."/>
            <person name="Vergez L.M."/>
            <person name="Land M.L."/>
            <person name="Motin V.L."/>
            <person name="Brubaker R.R."/>
            <person name="Fowler J."/>
            <person name="Hinnebusch J."/>
            <person name="Marceau M."/>
            <person name="Medigue C."/>
            <person name="Simonet M."/>
            <person name="Chenal-Francisque V."/>
            <person name="Souza B."/>
            <person name="Dacheux D."/>
            <person name="Elliott J.M."/>
            <person name="Derbise A."/>
            <person name="Hauser L.J."/>
            <person name="Garcia E."/>
        </authorList>
    </citation>
    <scope>NUCLEOTIDE SEQUENCE [LARGE SCALE GENOMIC DNA]</scope>
    <source>
        <strain>IP32953</strain>
    </source>
</reference>
<comment type="function">
    <text evidence="1">Specifically methylates the N4 position of cytidine in position 1402 (C1402) of 16S rRNA.</text>
</comment>
<comment type="catalytic activity">
    <reaction evidence="1">
        <text>cytidine(1402) in 16S rRNA + S-adenosyl-L-methionine = N(4)-methylcytidine(1402) in 16S rRNA + S-adenosyl-L-homocysteine + H(+)</text>
        <dbReference type="Rhea" id="RHEA:42928"/>
        <dbReference type="Rhea" id="RHEA-COMP:10286"/>
        <dbReference type="Rhea" id="RHEA-COMP:10287"/>
        <dbReference type="ChEBI" id="CHEBI:15378"/>
        <dbReference type="ChEBI" id="CHEBI:57856"/>
        <dbReference type="ChEBI" id="CHEBI:59789"/>
        <dbReference type="ChEBI" id="CHEBI:74506"/>
        <dbReference type="ChEBI" id="CHEBI:82748"/>
        <dbReference type="EC" id="2.1.1.199"/>
    </reaction>
</comment>
<comment type="subcellular location">
    <subcellularLocation>
        <location evidence="1">Cytoplasm</location>
    </subcellularLocation>
</comment>
<comment type="similarity">
    <text evidence="1">Belongs to the methyltransferase superfamily. RsmH family.</text>
</comment>